<protein>
    <recommendedName>
        <fullName>Keratin, type I cytoskeletal 39</fullName>
    </recommendedName>
    <alternativeName>
        <fullName>Cytokeratin-39</fullName>
        <shortName>CK-39</shortName>
    </alternativeName>
    <alternativeName>
        <fullName>Keratin-39</fullName>
        <shortName>K39</shortName>
    </alternativeName>
    <alternativeName>
        <fullName>Type I hair keratin Ka35</fullName>
    </alternativeName>
</protein>
<evidence type="ECO:0000250" key="1"/>
<evidence type="ECO:0000255" key="2">
    <source>
        <dbReference type="PROSITE-ProRule" id="PRU01188"/>
    </source>
</evidence>
<evidence type="ECO:0000256" key="3">
    <source>
        <dbReference type="SAM" id="MobiDB-lite"/>
    </source>
</evidence>
<evidence type="ECO:0000305" key="4"/>
<sequence length="482" mass="54287">MDTKGSTVTISSSTPPQNCSGNTNFRTNSSSNKSCCHDGQSTGCALQTPQGQGCGSSPCLYRCPHYLIRTYSFHPCLDDGSRCTEGINTHEKETMQILNERLANYLEKVRMLEGENADLEDKIQEACSKALPILCPDYLSYYTTIEELQQKILCTKAENSRLVSQIDNTKLAADDLRANYEAELSLRQLVEADANGLKQILDALTLSKADLEARVQSLTEELLCLKTNHEEEVNSLQCQLGDRINIEVTAAPSVDLNQILQEMRCRYESIMETNRKDVEEWFNTQMEELNQQVVSSSQQQQCCQKDIIELRRTISALEIELQAQHRMRESQECILTETEARYTALLAQIQSLIHNLEAQVADIRSALQRQSQEYEVLLDIKSRLECEIATYRSLLESLDGRLPCNPCATKWEPSCQARAMECFTPVYTSSSLPGIHKPCRASGPPSRILVKICTITKEIKDGKVISSYEHVQPCYITRATKV</sequence>
<keyword id="KW-0175">Coiled coil</keyword>
<keyword id="KW-0403">Intermediate filament</keyword>
<keyword id="KW-0416">Keratin</keyword>
<keyword id="KW-1185">Reference proteome</keyword>
<reference key="1">
    <citation type="journal article" date="2009" name="PLoS Biol.">
        <title>Lineage-specific biology revealed by a finished genome assembly of the mouse.</title>
        <authorList>
            <person name="Church D.M."/>
            <person name="Goodstadt L."/>
            <person name="Hillier L.W."/>
            <person name="Zody M.C."/>
            <person name="Goldstein S."/>
            <person name="She X."/>
            <person name="Bult C.J."/>
            <person name="Agarwala R."/>
            <person name="Cherry J.L."/>
            <person name="DiCuccio M."/>
            <person name="Hlavina W."/>
            <person name="Kapustin Y."/>
            <person name="Meric P."/>
            <person name="Maglott D."/>
            <person name="Birtle Z."/>
            <person name="Marques A.C."/>
            <person name="Graves T."/>
            <person name="Zhou S."/>
            <person name="Teague B."/>
            <person name="Potamousis K."/>
            <person name="Churas C."/>
            <person name="Place M."/>
            <person name="Herschleb J."/>
            <person name="Runnheim R."/>
            <person name="Forrest D."/>
            <person name="Amos-Landgraf J."/>
            <person name="Schwartz D.C."/>
            <person name="Cheng Z."/>
            <person name="Lindblad-Toh K."/>
            <person name="Eichler E.E."/>
            <person name="Ponting C.P."/>
        </authorList>
    </citation>
    <scope>NUCLEOTIDE SEQUENCE [LARGE SCALE GENOMIC DNA]</scope>
    <source>
        <strain>C57BL/6J</strain>
    </source>
</reference>
<reference key="2">
    <citation type="journal article" date="2004" name="Genome Res.">
        <title>The status, quality, and expansion of the NIH full-length cDNA project: the Mammalian Gene Collection (MGC).</title>
        <authorList>
            <consortium name="The MGC Project Team"/>
        </authorList>
    </citation>
    <scope>NUCLEOTIDE SEQUENCE [LARGE SCALE MRNA]</scope>
</reference>
<reference key="3">
    <citation type="journal article" date="2004" name="Eur. J. Cell Biol.">
        <title>Comprehensive analysis of keratin gene clusters in humans and rodents.</title>
        <authorList>
            <person name="Hesse M."/>
            <person name="Zimek A."/>
            <person name="Weber K."/>
            <person name="Magin T.M."/>
        </authorList>
    </citation>
    <scope>IDENTIFICATION</scope>
</reference>
<gene>
    <name type="primary">Krt39</name>
    <name type="synonym">Ka35</name>
</gene>
<proteinExistence type="evidence at transcript level"/>
<comment type="function">
    <text evidence="1">May play a role in late hair differentiation.</text>
</comment>
<comment type="subunit">
    <text>Heterotetramer of two type I and two type II keratins.</text>
</comment>
<comment type="miscellaneous">
    <text>There are two types of cytoskeletal and microfibrillar keratin, I (acidic) and II (neutral to basic) (40-55 and 56-70 kDa, respectively).</text>
</comment>
<comment type="similarity">
    <text evidence="2">Belongs to the intermediate filament family.</text>
</comment>
<comment type="sequence caution" evidence="4">
    <conflict type="erroneous gene model prediction">
        <sequence resource="EMBL-CDS" id="DAA04489"/>
    </conflict>
</comment>
<organism>
    <name type="scientific">Mus musculus</name>
    <name type="common">Mouse</name>
    <dbReference type="NCBI Taxonomy" id="10090"/>
    <lineage>
        <taxon>Eukaryota</taxon>
        <taxon>Metazoa</taxon>
        <taxon>Chordata</taxon>
        <taxon>Craniata</taxon>
        <taxon>Vertebrata</taxon>
        <taxon>Euteleostomi</taxon>
        <taxon>Mammalia</taxon>
        <taxon>Eutheria</taxon>
        <taxon>Euarchontoglires</taxon>
        <taxon>Glires</taxon>
        <taxon>Rodentia</taxon>
        <taxon>Myomorpha</taxon>
        <taxon>Muroidea</taxon>
        <taxon>Muridae</taxon>
        <taxon>Murinae</taxon>
        <taxon>Mus</taxon>
        <taxon>Mus</taxon>
    </lineage>
</organism>
<accession>Q6IFX4</accession>
<accession>A2VCT4</accession>
<accession>Q0VDS4</accession>
<dbReference type="EMBL" id="AL591417">
    <property type="status" value="NOT_ANNOTATED_CDS"/>
    <property type="molecule type" value="Genomic_DNA"/>
</dbReference>
<dbReference type="EMBL" id="BC119541">
    <property type="protein sequence ID" value="AAI19542.1"/>
    <property type="molecule type" value="mRNA"/>
</dbReference>
<dbReference type="EMBL" id="BC128563">
    <property type="protein sequence ID" value="AAI28564.1"/>
    <property type="molecule type" value="mRNA"/>
</dbReference>
<dbReference type="EMBL" id="BK004022">
    <property type="protein sequence ID" value="DAA04489.1"/>
    <property type="status" value="ALT_SEQ"/>
    <property type="molecule type" value="mRNA"/>
</dbReference>
<dbReference type="CCDS" id="CCDS25383.1"/>
<dbReference type="RefSeq" id="NP_998895.2">
    <property type="nucleotide sequence ID" value="NM_213730.3"/>
</dbReference>
<dbReference type="SMR" id="Q6IFX4"/>
<dbReference type="FunCoup" id="Q6IFX4">
    <property type="interactions" value="184"/>
</dbReference>
<dbReference type="IntAct" id="Q6IFX4">
    <property type="interactions" value="1"/>
</dbReference>
<dbReference type="STRING" id="10090.ENSMUSP00000103069"/>
<dbReference type="iPTMnet" id="Q6IFX4"/>
<dbReference type="PhosphoSitePlus" id="Q6IFX4"/>
<dbReference type="PaxDb" id="10090-ENSMUSP00000103069"/>
<dbReference type="PeptideAtlas" id="Q6IFX4"/>
<dbReference type="ProteomicsDB" id="269053"/>
<dbReference type="Antibodypedia" id="55323">
    <property type="antibodies" value="28 antibodies from 9 providers"/>
</dbReference>
<dbReference type="DNASU" id="237934"/>
<dbReference type="Ensembl" id="ENSMUST00000076948.2">
    <property type="protein sequence ID" value="ENSMUSP00000076216.2"/>
    <property type="gene ID" value="ENSMUSG00000064165.9"/>
</dbReference>
<dbReference type="Ensembl" id="ENSMUST00000107445.8">
    <property type="protein sequence ID" value="ENSMUSP00000103069.2"/>
    <property type="gene ID" value="ENSMUSG00000064165.9"/>
</dbReference>
<dbReference type="GeneID" id="237934"/>
<dbReference type="KEGG" id="mmu:237934"/>
<dbReference type="UCSC" id="uc007lix.1">
    <property type="organism name" value="mouse"/>
</dbReference>
<dbReference type="AGR" id="MGI:3588208"/>
<dbReference type="CTD" id="390792"/>
<dbReference type="MGI" id="MGI:3588208">
    <property type="gene designation" value="Krt39"/>
</dbReference>
<dbReference type="VEuPathDB" id="HostDB:ENSMUSG00000064165"/>
<dbReference type="eggNOG" id="ENOG502SH7Y">
    <property type="taxonomic scope" value="Eukaryota"/>
</dbReference>
<dbReference type="GeneTree" id="ENSGT00940000162203"/>
<dbReference type="HOGENOM" id="CLU_012560_8_0_1"/>
<dbReference type="InParanoid" id="Q6IFX4"/>
<dbReference type="OMA" id="PCATKCE"/>
<dbReference type="OrthoDB" id="9447454at2759"/>
<dbReference type="PhylomeDB" id="Q6IFX4"/>
<dbReference type="TreeFam" id="TF332742"/>
<dbReference type="Reactome" id="R-MMU-6805567">
    <property type="pathway name" value="Keratinization"/>
</dbReference>
<dbReference type="Reactome" id="R-MMU-6809371">
    <property type="pathway name" value="Formation of the cornified envelope"/>
</dbReference>
<dbReference type="BioGRID-ORCS" id="237934">
    <property type="hits" value="3 hits in 78 CRISPR screens"/>
</dbReference>
<dbReference type="PRO" id="PR:Q6IFX4"/>
<dbReference type="Proteomes" id="UP000000589">
    <property type="component" value="Chromosome 11"/>
</dbReference>
<dbReference type="RNAct" id="Q6IFX4">
    <property type="molecule type" value="protein"/>
</dbReference>
<dbReference type="Bgee" id="ENSMUSG00000064165">
    <property type="expression patterns" value="Expressed in tail skin and 14 other cell types or tissues"/>
</dbReference>
<dbReference type="GO" id="GO:0005882">
    <property type="term" value="C:intermediate filament"/>
    <property type="evidence" value="ECO:0007669"/>
    <property type="project" value="UniProtKB-KW"/>
</dbReference>
<dbReference type="GO" id="GO:0005198">
    <property type="term" value="F:structural molecule activity"/>
    <property type="evidence" value="ECO:0007669"/>
    <property type="project" value="InterPro"/>
</dbReference>
<dbReference type="FunFam" id="1.20.5.1160:FF:000002">
    <property type="entry name" value="Type I keratin 10"/>
    <property type="match status" value="1"/>
</dbReference>
<dbReference type="FunFam" id="1.20.5.170:FF:000002">
    <property type="entry name" value="Type I keratin KA11"/>
    <property type="match status" value="1"/>
</dbReference>
<dbReference type="FunFam" id="1.20.5.500:FF:000001">
    <property type="entry name" value="Type II keratin 23"/>
    <property type="match status" value="1"/>
</dbReference>
<dbReference type="Gene3D" id="1.20.5.170">
    <property type="match status" value="1"/>
</dbReference>
<dbReference type="Gene3D" id="1.20.5.500">
    <property type="entry name" value="Single helix bin"/>
    <property type="match status" value="1"/>
</dbReference>
<dbReference type="Gene3D" id="1.20.5.1160">
    <property type="entry name" value="Vasodilator-stimulated phosphoprotein"/>
    <property type="match status" value="1"/>
</dbReference>
<dbReference type="InterPro" id="IPR018039">
    <property type="entry name" value="IF_conserved"/>
</dbReference>
<dbReference type="InterPro" id="IPR039008">
    <property type="entry name" value="IF_rod_dom"/>
</dbReference>
<dbReference type="InterPro" id="IPR002957">
    <property type="entry name" value="Keratin_I"/>
</dbReference>
<dbReference type="PANTHER" id="PTHR23239">
    <property type="entry name" value="INTERMEDIATE FILAMENT"/>
    <property type="match status" value="1"/>
</dbReference>
<dbReference type="PANTHER" id="PTHR23239:SF106">
    <property type="entry name" value="KERATIN, TYPE I CYTOSKELETAL 39"/>
    <property type="match status" value="1"/>
</dbReference>
<dbReference type="Pfam" id="PF00038">
    <property type="entry name" value="Filament"/>
    <property type="match status" value="1"/>
</dbReference>
<dbReference type="PRINTS" id="PR01248">
    <property type="entry name" value="TYPE1KERATIN"/>
</dbReference>
<dbReference type="SMART" id="SM01391">
    <property type="entry name" value="Filament"/>
    <property type="match status" value="1"/>
</dbReference>
<dbReference type="SUPFAM" id="SSF64593">
    <property type="entry name" value="Intermediate filament protein, coiled coil region"/>
    <property type="match status" value="2"/>
</dbReference>
<dbReference type="PROSITE" id="PS00226">
    <property type="entry name" value="IF_ROD_1"/>
    <property type="match status" value="1"/>
</dbReference>
<dbReference type="PROSITE" id="PS51842">
    <property type="entry name" value="IF_ROD_2"/>
    <property type="match status" value="1"/>
</dbReference>
<feature type="chain" id="PRO_0000314854" description="Keratin, type I cytoskeletal 39">
    <location>
        <begin position="1"/>
        <end position="482"/>
    </location>
</feature>
<feature type="domain" description="IF rod" evidence="2">
    <location>
        <begin position="91"/>
        <end position="402"/>
    </location>
</feature>
<feature type="region of interest" description="Head">
    <location>
        <begin position="1"/>
        <end position="91"/>
    </location>
</feature>
<feature type="region of interest" description="Disordered" evidence="3">
    <location>
        <begin position="1"/>
        <end position="24"/>
    </location>
</feature>
<feature type="region of interest" description="Coil 1A">
    <location>
        <begin position="92"/>
        <end position="126"/>
    </location>
</feature>
<feature type="region of interest" description="Linker 1">
    <location>
        <begin position="127"/>
        <end position="137"/>
    </location>
</feature>
<feature type="region of interest" description="Coil 1B">
    <location>
        <begin position="138"/>
        <end position="238"/>
    </location>
</feature>
<feature type="region of interest" description="Linker 12">
    <location>
        <begin position="239"/>
        <end position="254"/>
    </location>
</feature>
<feature type="region of interest" description="Coil 2">
    <location>
        <begin position="255"/>
        <end position="398"/>
    </location>
</feature>
<feature type="region of interest" description="Tail">
    <location>
        <begin position="399"/>
        <end position="482"/>
    </location>
</feature>
<feature type="site" description="Stutter">
    <location>
        <position position="340"/>
    </location>
</feature>
<feature type="sequence conflict" description="In Ref. 2; AAI28564." evidence="4" ref="2">
    <original>S</original>
    <variation>G</variation>
    <location>
        <position position="351"/>
    </location>
</feature>
<name>K1C39_MOUSE</name>